<accession>A0K3Q0</accession>
<name>RS4_BURCH</name>
<comment type="function">
    <text evidence="1">One of the primary rRNA binding proteins, it binds directly to 16S rRNA where it nucleates assembly of the body of the 30S subunit.</text>
</comment>
<comment type="function">
    <text evidence="1">With S5 and S12 plays an important role in translational accuracy.</text>
</comment>
<comment type="subunit">
    <text evidence="1">Part of the 30S ribosomal subunit. Contacts protein S5. The interaction surface between S4 and S5 is involved in control of translational fidelity.</text>
</comment>
<comment type="similarity">
    <text evidence="1">Belongs to the universal ribosomal protein uS4 family.</text>
</comment>
<dbReference type="EMBL" id="CP000458">
    <property type="protein sequence ID" value="ABK07127.1"/>
    <property type="molecule type" value="Genomic_DNA"/>
</dbReference>
<dbReference type="RefSeq" id="WP_006477177.1">
    <property type="nucleotide sequence ID" value="NC_008542.1"/>
</dbReference>
<dbReference type="SMR" id="A0K3Q0"/>
<dbReference type="GeneID" id="83047156"/>
<dbReference type="KEGG" id="bch:Bcen2424_0373"/>
<dbReference type="HOGENOM" id="CLU_092403_0_2_4"/>
<dbReference type="GO" id="GO:0015935">
    <property type="term" value="C:small ribosomal subunit"/>
    <property type="evidence" value="ECO:0007669"/>
    <property type="project" value="InterPro"/>
</dbReference>
<dbReference type="GO" id="GO:0019843">
    <property type="term" value="F:rRNA binding"/>
    <property type="evidence" value="ECO:0007669"/>
    <property type="project" value="UniProtKB-UniRule"/>
</dbReference>
<dbReference type="GO" id="GO:0003735">
    <property type="term" value="F:structural constituent of ribosome"/>
    <property type="evidence" value="ECO:0007669"/>
    <property type="project" value="InterPro"/>
</dbReference>
<dbReference type="GO" id="GO:0042274">
    <property type="term" value="P:ribosomal small subunit biogenesis"/>
    <property type="evidence" value="ECO:0007669"/>
    <property type="project" value="TreeGrafter"/>
</dbReference>
<dbReference type="GO" id="GO:0006412">
    <property type="term" value="P:translation"/>
    <property type="evidence" value="ECO:0007669"/>
    <property type="project" value="UniProtKB-UniRule"/>
</dbReference>
<dbReference type="CDD" id="cd00165">
    <property type="entry name" value="S4"/>
    <property type="match status" value="1"/>
</dbReference>
<dbReference type="FunFam" id="1.10.1050.10:FF:000001">
    <property type="entry name" value="30S ribosomal protein S4"/>
    <property type="match status" value="1"/>
</dbReference>
<dbReference type="FunFam" id="3.10.290.10:FF:000001">
    <property type="entry name" value="30S ribosomal protein S4"/>
    <property type="match status" value="1"/>
</dbReference>
<dbReference type="Gene3D" id="1.10.1050.10">
    <property type="entry name" value="Ribosomal Protein S4 Delta 41, Chain A, domain 1"/>
    <property type="match status" value="1"/>
</dbReference>
<dbReference type="Gene3D" id="3.10.290.10">
    <property type="entry name" value="RNA-binding S4 domain"/>
    <property type="match status" value="1"/>
</dbReference>
<dbReference type="HAMAP" id="MF_01306_B">
    <property type="entry name" value="Ribosomal_uS4_B"/>
    <property type="match status" value="1"/>
</dbReference>
<dbReference type="InterPro" id="IPR022801">
    <property type="entry name" value="Ribosomal_uS4"/>
</dbReference>
<dbReference type="InterPro" id="IPR005709">
    <property type="entry name" value="Ribosomal_uS4_bac-type"/>
</dbReference>
<dbReference type="InterPro" id="IPR018079">
    <property type="entry name" value="Ribosomal_uS4_CS"/>
</dbReference>
<dbReference type="InterPro" id="IPR001912">
    <property type="entry name" value="Ribosomal_uS4_N"/>
</dbReference>
<dbReference type="InterPro" id="IPR002942">
    <property type="entry name" value="S4_RNA-bd"/>
</dbReference>
<dbReference type="InterPro" id="IPR036986">
    <property type="entry name" value="S4_RNA-bd_sf"/>
</dbReference>
<dbReference type="NCBIfam" id="NF003717">
    <property type="entry name" value="PRK05327.1"/>
    <property type="match status" value="1"/>
</dbReference>
<dbReference type="NCBIfam" id="TIGR01017">
    <property type="entry name" value="rpsD_bact"/>
    <property type="match status" value="1"/>
</dbReference>
<dbReference type="PANTHER" id="PTHR11831">
    <property type="entry name" value="30S 40S RIBOSOMAL PROTEIN"/>
    <property type="match status" value="1"/>
</dbReference>
<dbReference type="PANTHER" id="PTHR11831:SF4">
    <property type="entry name" value="SMALL RIBOSOMAL SUBUNIT PROTEIN US4M"/>
    <property type="match status" value="1"/>
</dbReference>
<dbReference type="Pfam" id="PF00163">
    <property type="entry name" value="Ribosomal_S4"/>
    <property type="match status" value="1"/>
</dbReference>
<dbReference type="Pfam" id="PF01479">
    <property type="entry name" value="S4"/>
    <property type="match status" value="1"/>
</dbReference>
<dbReference type="SMART" id="SM01390">
    <property type="entry name" value="Ribosomal_S4"/>
    <property type="match status" value="1"/>
</dbReference>
<dbReference type="SMART" id="SM00363">
    <property type="entry name" value="S4"/>
    <property type="match status" value="1"/>
</dbReference>
<dbReference type="SUPFAM" id="SSF55174">
    <property type="entry name" value="Alpha-L RNA-binding motif"/>
    <property type="match status" value="1"/>
</dbReference>
<dbReference type="PROSITE" id="PS00632">
    <property type="entry name" value="RIBOSOMAL_S4"/>
    <property type="match status" value="1"/>
</dbReference>
<dbReference type="PROSITE" id="PS50889">
    <property type="entry name" value="S4"/>
    <property type="match status" value="1"/>
</dbReference>
<sequence length="207" mass="23186">MARYIGPKAKLSRREGTDLFLKSARRSLADKCKLDSKPGQHGRTSGARTSDYGTQLREKQKVKRIYGVLERQFRRYFAEADRRKGNTGENLLQLLESRLDNVVYRMGFGSTRAEARQLVSHKSITVNGVVANVPSQQVKAGDVVAIREKAKKQARIVEALSLAEQGGMPSWVAVDAKKFEGTFKQMPERAEIAGDINESLIVELYSR</sequence>
<reference key="1">
    <citation type="submission" date="2006-08" db="EMBL/GenBank/DDBJ databases">
        <title>Complete sequence of chromosome 1 of Burkholderia cenocepacia HI2424.</title>
        <authorList>
            <person name="Copeland A."/>
            <person name="Lucas S."/>
            <person name="Lapidus A."/>
            <person name="Barry K."/>
            <person name="Detter J.C."/>
            <person name="Glavina del Rio T."/>
            <person name="Hammon N."/>
            <person name="Israni S."/>
            <person name="Pitluck S."/>
            <person name="Chain P."/>
            <person name="Malfatti S."/>
            <person name="Shin M."/>
            <person name="Vergez L."/>
            <person name="Schmutz J."/>
            <person name="Larimer F."/>
            <person name="Land M."/>
            <person name="Hauser L."/>
            <person name="Kyrpides N."/>
            <person name="Kim E."/>
            <person name="LiPuma J.J."/>
            <person name="Gonzalez C.F."/>
            <person name="Konstantinidis K."/>
            <person name="Tiedje J.M."/>
            <person name="Richardson P."/>
        </authorList>
    </citation>
    <scope>NUCLEOTIDE SEQUENCE [LARGE SCALE GENOMIC DNA]</scope>
    <source>
        <strain>HI2424</strain>
    </source>
</reference>
<protein>
    <recommendedName>
        <fullName evidence="1">Small ribosomal subunit protein uS4</fullName>
    </recommendedName>
    <alternativeName>
        <fullName evidence="3">30S ribosomal protein S4</fullName>
    </alternativeName>
</protein>
<keyword id="KW-0687">Ribonucleoprotein</keyword>
<keyword id="KW-0689">Ribosomal protein</keyword>
<keyword id="KW-0694">RNA-binding</keyword>
<keyword id="KW-0699">rRNA-binding</keyword>
<organism>
    <name type="scientific">Burkholderia cenocepacia (strain HI2424)</name>
    <dbReference type="NCBI Taxonomy" id="331272"/>
    <lineage>
        <taxon>Bacteria</taxon>
        <taxon>Pseudomonadati</taxon>
        <taxon>Pseudomonadota</taxon>
        <taxon>Betaproteobacteria</taxon>
        <taxon>Burkholderiales</taxon>
        <taxon>Burkholderiaceae</taxon>
        <taxon>Burkholderia</taxon>
        <taxon>Burkholderia cepacia complex</taxon>
    </lineage>
</organism>
<evidence type="ECO:0000255" key="1">
    <source>
        <dbReference type="HAMAP-Rule" id="MF_01306"/>
    </source>
</evidence>
<evidence type="ECO:0000256" key="2">
    <source>
        <dbReference type="SAM" id="MobiDB-lite"/>
    </source>
</evidence>
<evidence type="ECO:0000305" key="3"/>
<gene>
    <name evidence="1" type="primary">rpsD</name>
    <name type="ordered locus">Bcen2424_0373</name>
</gene>
<proteinExistence type="inferred from homology"/>
<feature type="chain" id="PRO_0000293251" description="Small ribosomal subunit protein uS4">
    <location>
        <begin position="1"/>
        <end position="207"/>
    </location>
</feature>
<feature type="domain" description="S4 RNA-binding" evidence="1">
    <location>
        <begin position="97"/>
        <end position="160"/>
    </location>
</feature>
<feature type="region of interest" description="Disordered" evidence="2">
    <location>
        <begin position="31"/>
        <end position="55"/>
    </location>
</feature>
<feature type="compositionally biased region" description="Polar residues" evidence="2">
    <location>
        <begin position="42"/>
        <end position="53"/>
    </location>
</feature>